<gene>
    <name evidence="1" type="primary">accA</name>
    <name type="ordered locus">syc0052_d</name>
</gene>
<proteinExistence type="inferred from homology"/>
<dbReference type="EC" id="2.1.3.15" evidence="1"/>
<dbReference type="EMBL" id="AP008231">
    <property type="protein sequence ID" value="BAD78242.1"/>
    <property type="molecule type" value="Genomic_DNA"/>
</dbReference>
<dbReference type="RefSeq" id="WP_011242365.1">
    <property type="nucleotide sequence ID" value="NZ_CP085785.1"/>
</dbReference>
<dbReference type="SMR" id="Q5N625"/>
<dbReference type="KEGG" id="syc:syc0052_d"/>
<dbReference type="eggNOG" id="COG0825">
    <property type="taxonomic scope" value="Bacteria"/>
</dbReference>
<dbReference type="UniPathway" id="UPA00655">
    <property type="reaction ID" value="UER00711"/>
</dbReference>
<dbReference type="Proteomes" id="UP000001175">
    <property type="component" value="Chromosome"/>
</dbReference>
<dbReference type="GO" id="GO:0009317">
    <property type="term" value="C:acetyl-CoA carboxylase complex"/>
    <property type="evidence" value="ECO:0007669"/>
    <property type="project" value="InterPro"/>
</dbReference>
<dbReference type="GO" id="GO:0003989">
    <property type="term" value="F:acetyl-CoA carboxylase activity"/>
    <property type="evidence" value="ECO:0007669"/>
    <property type="project" value="InterPro"/>
</dbReference>
<dbReference type="GO" id="GO:0005524">
    <property type="term" value="F:ATP binding"/>
    <property type="evidence" value="ECO:0007669"/>
    <property type="project" value="UniProtKB-KW"/>
</dbReference>
<dbReference type="GO" id="GO:0016743">
    <property type="term" value="F:carboxyl- or carbamoyltransferase activity"/>
    <property type="evidence" value="ECO:0007669"/>
    <property type="project" value="UniProtKB-UniRule"/>
</dbReference>
<dbReference type="GO" id="GO:0006633">
    <property type="term" value="P:fatty acid biosynthetic process"/>
    <property type="evidence" value="ECO:0007669"/>
    <property type="project" value="UniProtKB-KW"/>
</dbReference>
<dbReference type="GO" id="GO:2001295">
    <property type="term" value="P:malonyl-CoA biosynthetic process"/>
    <property type="evidence" value="ECO:0007669"/>
    <property type="project" value="UniProtKB-UniRule"/>
</dbReference>
<dbReference type="Gene3D" id="3.90.226.10">
    <property type="entry name" value="2-enoyl-CoA Hydratase, Chain A, domain 1"/>
    <property type="match status" value="1"/>
</dbReference>
<dbReference type="HAMAP" id="MF_00823">
    <property type="entry name" value="AcetylCoA_CT_alpha"/>
    <property type="match status" value="1"/>
</dbReference>
<dbReference type="InterPro" id="IPR001095">
    <property type="entry name" value="Acetyl_CoA_COase_a_su"/>
</dbReference>
<dbReference type="InterPro" id="IPR029045">
    <property type="entry name" value="ClpP/crotonase-like_dom_sf"/>
</dbReference>
<dbReference type="InterPro" id="IPR011763">
    <property type="entry name" value="COA_CT_C"/>
</dbReference>
<dbReference type="NCBIfam" id="TIGR00513">
    <property type="entry name" value="accA"/>
    <property type="match status" value="1"/>
</dbReference>
<dbReference type="NCBIfam" id="NF041504">
    <property type="entry name" value="AccA_sub"/>
    <property type="match status" value="1"/>
</dbReference>
<dbReference type="NCBIfam" id="NF004344">
    <property type="entry name" value="PRK05724.1"/>
    <property type="match status" value="1"/>
</dbReference>
<dbReference type="PANTHER" id="PTHR42853">
    <property type="entry name" value="ACETYL-COENZYME A CARBOXYLASE CARBOXYL TRANSFERASE SUBUNIT ALPHA"/>
    <property type="match status" value="1"/>
</dbReference>
<dbReference type="PANTHER" id="PTHR42853:SF3">
    <property type="entry name" value="ACETYL-COENZYME A CARBOXYLASE CARBOXYL TRANSFERASE SUBUNIT ALPHA, CHLOROPLASTIC"/>
    <property type="match status" value="1"/>
</dbReference>
<dbReference type="Pfam" id="PF03255">
    <property type="entry name" value="ACCA"/>
    <property type="match status" value="1"/>
</dbReference>
<dbReference type="PRINTS" id="PR01069">
    <property type="entry name" value="ACCCTRFRASEA"/>
</dbReference>
<dbReference type="SUPFAM" id="SSF52096">
    <property type="entry name" value="ClpP/crotonase"/>
    <property type="match status" value="1"/>
</dbReference>
<dbReference type="PROSITE" id="PS50989">
    <property type="entry name" value="COA_CT_CTER"/>
    <property type="match status" value="1"/>
</dbReference>
<sequence>MAAPVTKKPILLEFEKPLVELEERITQIRTLAADNQVDVSGQIQQLEARAIQLRREIFSNLSPAQRIQVARHPRRPSTLDYIQAISDEWIELHGDRNGSDDLALVGGVGALDGQPVVFLGHQKGRDTKDNVLRNFGMASPGGYRKALRLMEHADRFGMPILTFIDTPGAYAGVSAEELGQGEAIAVNLREMFRFSVPILCTVIGEGGSGGALGIGVGDRLLMFEHSVYTVASPEACASILWRDAGKAAQAAEALKITARDLKQLGILDEIITEPLGGAHSAPLETAQSLRQVLLRHLKDLQALSPAQLREQRYQKFRQLGVFLESSD</sequence>
<protein>
    <recommendedName>
        <fullName evidence="1">Acetyl-coenzyme A carboxylase carboxyl transferase subunit alpha</fullName>
        <shortName evidence="1">ACCase subunit alpha</shortName>
        <shortName evidence="1">Acetyl-CoA carboxylase carboxyltransferase subunit alpha</shortName>
        <ecNumber evidence="1">2.1.3.15</ecNumber>
    </recommendedName>
</protein>
<organism>
    <name type="scientific">Synechococcus sp. (strain ATCC 27144 / PCC 6301 / SAUG 1402/1)</name>
    <name type="common">Anacystis nidulans</name>
    <dbReference type="NCBI Taxonomy" id="269084"/>
    <lineage>
        <taxon>Bacteria</taxon>
        <taxon>Bacillati</taxon>
        <taxon>Cyanobacteriota</taxon>
        <taxon>Cyanophyceae</taxon>
        <taxon>Synechococcales</taxon>
        <taxon>Synechococcaceae</taxon>
        <taxon>Synechococcus</taxon>
    </lineage>
</organism>
<reference key="1">
    <citation type="journal article" date="2007" name="Photosyn. Res.">
        <title>Complete nucleotide sequence of the freshwater unicellular cyanobacterium Synechococcus elongatus PCC 6301 chromosome: gene content and organization.</title>
        <authorList>
            <person name="Sugita C."/>
            <person name="Ogata K."/>
            <person name="Shikata M."/>
            <person name="Jikuya H."/>
            <person name="Takano J."/>
            <person name="Furumichi M."/>
            <person name="Kanehisa M."/>
            <person name="Omata T."/>
            <person name="Sugiura M."/>
            <person name="Sugita M."/>
        </authorList>
    </citation>
    <scope>NUCLEOTIDE SEQUENCE [LARGE SCALE GENOMIC DNA]</scope>
    <source>
        <strain>ATCC 27144 / PCC 6301 / SAUG 1402/1</strain>
    </source>
</reference>
<comment type="function">
    <text evidence="1">Component of the acetyl coenzyme A carboxylase (ACC) complex. First, biotin carboxylase catalyzes the carboxylation of biotin on its carrier protein (BCCP) and then the CO(2) group is transferred by the carboxyltransferase to acetyl-CoA to form malonyl-CoA.</text>
</comment>
<comment type="catalytic activity">
    <reaction evidence="1">
        <text>N(6)-carboxybiotinyl-L-lysyl-[protein] + acetyl-CoA = N(6)-biotinyl-L-lysyl-[protein] + malonyl-CoA</text>
        <dbReference type="Rhea" id="RHEA:54728"/>
        <dbReference type="Rhea" id="RHEA-COMP:10505"/>
        <dbReference type="Rhea" id="RHEA-COMP:10506"/>
        <dbReference type="ChEBI" id="CHEBI:57288"/>
        <dbReference type="ChEBI" id="CHEBI:57384"/>
        <dbReference type="ChEBI" id="CHEBI:83144"/>
        <dbReference type="ChEBI" id="CHEBI:83145"/>
        <dbReference type="EC" id="2.1.3.15"/>
    </reaction>
</comment>
<comment type="pathway">
    <text evidence="1">Lipid metabolism; malonyl-CoA biosynthesis; malonyl-CoA from acetyl-CoA: step 1/1.</text>
</comment>
<comment type="subunit">
    <text evidence="1">Acetyl-CoA carboxylase is a heterohexamer composed of biotin carboxyl carrier protein (AccB), biotin carboxylase (AccC) and two subunits each of ACCase subunit alpha (AccA) and ACCase subunit beta (AccD).</text>
</comment>
<comment type="subcellular location">
    <subcellularLocation>
        <location evidence="1">Cytoplasm</location>
    </subcellularLocation>
</comment>
<comment type="similarity">
    <text evidence="1">Belongs to the AccA family.</text>
</comment>
<feature type="chain" id="PRO_0000223841" description="Acetyl-coenzyme A carboxylase carboxyl transferase subunit alpha">
    <location>
        <begin position="1"/>
        <end position="327"/>
    </location>
</feature>
<feature type="domain" description="CoA carboxyltransferase C-terminal" evidence="2">
    <location>
        <begin position="46"/>
        <end position="299"/>
    </location>
</feature>
<evidence type="ECO:0000255" key="1">
    <source>
        <dbReference type="HAMAP-Rule" id="MF_00823"/>
    </source>
</evidence>
<evidence type="ECO:0000255" key="2">
    <source>
        <dbReference type="PROSITE-ProRule" id="PRU01137"/>
    </source>
</evidence>
<name>ACCA_SYNP6</name>
<keyword id="KW-0067">ATP-binding</keyword>
<keyword id="KW-0963">Cytoplasm</keyword>
<keyword id="KW-0275">Fatty acid biosynthesis</keyword>
<keyword id="KW-0276">Fatty acid metabolism</keyword>
<keyword id="KW-0444">Lipid biosynthesis</keyword>
<keyword id="KW-0443">Lipid metabolism</keyword>
<keyword id="KW-0547">Nucleotide-binding</keyword>
<keyword id="KW-0808">Transferase</keyword>
<accession>Q5N625</accession>